<dbReference type="EMBL" id="Z23106">
    <property type="protein sequence ID" value="CAA80653.1"/>
    <property type="molecule type" value="mRNA"/>
</dbReference>
<dbReference type="PIR" id="S65461">
    <property type="entry name" value="S34347"/>
</dbReference>
<dbReference type="SMR" id="P38411"/>
<dbReference type="GO" id="GO:0005737">
    <property type="term" value="C:cytoplasm"/>
    <property type="evidence" value="ECO:0007669"/>
    <property type="project" value="TreeGrafter"/>
</dbReference>
<dbReference type="GO" id="GO:0005834">
    <property type="term" value="C:heterotrimeric G-protein complex"/>
    <property type="evidence" value="ECO:0007669"/>
    <property type="project" value="TreeGrafter"/>
</dbReference>
<dbReference type="GO" id="GO:0001664">
    <property type="term" value="F:G protein-coupled receptor binding"/>
    <property type="evidence" value="ECO:0007669"/>
    <property type="project" value="InterPro"/>
</dbReference>
<dbReference type="GO" id="GO:0031683">
    <property type="term" value="F:G-protein beta/gamma-subunit complex binding"/>
    <property type="evidence" value="ECO:0007669"/>
    <property type="project" value="InterPro"/>
</dbReference>
<dbReference type="GO" id="GO:0005525">
    <property type="term" value="F:GTP binding"/>
    <property type="evidence" value="ECO:0007669"/>
    <property type="project" value="UniProtKB-KW"/>
</dbReference>
<dbReference type="GO" id="GO:0003924">
    <property type="term" value="F:GTPase activity"/>
    <property type="evidence" value="ECO:0007669"/>
    <property type="project" value="InterPro"/>
</dbReference>
<dbReference type="GO" id="GO:0046872">
    <property type="term" value="F:metal ion binding"/>
    <property type="evidence" value="ECO:0007669"/>
    <property type="project" value="UniProtKB-KW"/>
</dbReference>
<dbReference type="GO" id="GO:0007188">
    <property type="term" value="P:adenylate cyclase-modulating G protein-coupled receptor signaling pathway"/>
    <property type="evidence" value="ECO:0007669"/>
    <property type="project" value="TreeGrafter"/>
</dbReference>
<dbReference type="CDD" id="cd00066">
    <property type="entry name" value="G-alpha"/>
    <property type="match status" value="1"/>
</dbReference>
<dbReference type="FunFam" id="3.40.50.300:FF:003977">
    <property type="entry name" value="Guanine nucleotide-binding protein G(q) subunit alpha"/>
    <property type="match status" value="1"/>
</dbReference>
<dbReference type="FunFam" id="1.10.400.10:FF:000002">
    <property type="entry name" value="guanine nucleotide-binding protein G(Q) subunit alpha"/>
    <property type="match status" value="1"/>
</dbReference>
<dbReference type="FunFam" id="3.40.50.300:FF:000692">
    <property type="entry name" value="Guanine nucleotide-binding protein subunit alpha"/>
    <property type="match status" value="1"/>
</dbReference>
<dbReference type="Gene3D" id="1.10.400.10">
    <property type="entry name" value="GI Alpha 1, domain 2-like"/>
    <property type="match status" value="1"/>
</dbReference>
<dbReference type="Gene3D" id="3.40.50.300">
    <property type="entry name" value="P-loop containing nucleotide triphosphate hydrolases"/>
    <property type="match status" value="1"/>
</dbReference>
<dbReference type="InterPro" id="IPR000654">
    <property type="entry name" value="Gprotein_alpha_Q"/>
</dbReference>
<dbReference type="InterPro" id="IPR001019">
    <property type="entry name" value="Gprotein_alpha_su"/>
</dbReference>
<dbReference type="InterPro" id="IPR011025">
    <property type="entry name" value="GproteinA_insert"/>
</dbReference>
<dbReference type="InterPro" id="IPR027417">
    <property type="entry name" value="P-loop_NTPase"/>
</dbReference>
<dbReference type="PANTHER" id="PTHR10218">
    <property type="entry name" value="GTP-BINDING PROTEIN ALPHA SUBUNIT"/>
    <property type="match status" value="1"/>
</dbReference>
<dbReference type="PANTHER" id="PTHR10218:SF329">
    <property type="entry name" value="GUANINE NUCLEOTIDE-BINDING PROTEIN G(Q) SUBUNIT ALPHA"/>
    <property type="match status" value="1"/>
</dbReference>
<dbReference type="Pfam" id="PF00503">
    <property type="entry name" value="G-alpha"/>
    <property type="match status" value="1"/>
</dbReference>
<dbReference type="PRINTS" id="PR00318">
    <property type="entry name" value="GPROTEINA"/>
</dbReference>
<dbReference type="PRINTS" id="PR00442">
    <property type="entry name" value="GPROTEINAQ"/>
</dbReference>
<dbReference type="SMART" id="SM00275">
    <property type="entry name" value="G_alpha"/>
    <property type="match status" value="1"/>
</dbReference>
<dbReference type="SUPFAM" id="SSF52540">
    <property type="entry name" value="P-loop containing nucleoside triphosphate hydrolases"/>
    <property type="match status" value="1"/>
</dbReference>
<dbReference type="SUPFAM" id="SSF47895">
    <property type="entry name" value="Transducin (alpha subunit), insertion domain"/>
    <property type="match status" value="1"/>
</dbReference>
<dbReference type="PROSITE" id="PS51882">
    <property type="entry name" value="G_ALPHA"/>
    <property type="match status" value="1"/>
</dbReference>
<reference key="1">
    <citation type="journal article" date="1995" name="Eur. J. Biochem.">
        <title>Cloning of a molluscan G protein alpha subunit of the Gq class which is expressed differentially in identified neurons.</title>
        <authorList>
            <person name="Knol J.C."/>
            <person name="Ramnatsingh S."/>
            <person name="van Kesteren E.R."/>
            <person name="van Minnen J."/>
            <person name="Planta R.J."/>
            <person name="van Heerikhuizen H."/>
            <person name="Vreugdenhil E."/>
        </authorList>
    </citation>
    <scope>NUCLEOTIDE SEQUENCE [MRNA]</scope>
</reference>
<organism>
    <name type="scientific">Lymnaea stagnalis</name>
    <name type="common">Great pond snail</name>
    <name type="synonym">Helix stagnalis</name>
    <dbReference type="NCBI Taxonomy" id="6523"/>
    <lineage>
        <taxon>Eukaryota</taxon>
        <taxon>Metazoa</taxon>
        <taxon>Spiralia</taxon>
        <taxon>Lophotrochozoa</taxon>
        <taxon>Mollusca</taxon>
        <taxon>Gastropoda</taxon>
        <taxon>Heterobranchia</taxon>
        <taxon>Euthyneura</taxon>
        <taxon>Panpulmonata</taxon>
        <taxon>Hygrophila</taxon>
        <taxon>Lymnaeoidea</taxon>
        <taxon>Lymnaeidae</taxon>
        <taxon>Lymnaea</taxon>
    </lineage>
</organism>
<comment type="function">
    <text>Guanine nucleotide-binding proteins (G proteins) are involved as modulators or transducers in various transmembrane signaling systems.</text>
</comment>
<comment type="subunit">
    <text>G proteins are composed of 3 units; alpha, beta and gamma. The alpha chain contains the guanine nucleotide binding site.</text>
</comment>
<comment type="similarity">
    <text evidence="4">Belongs to the G-alpha family. G(q) subfamily.</text>
</comment>
<evidence type="ECO:0000250" key="1"/>
<evidence type="ECO:0000255" key="2"/>
<evidence type="ECO:0000255" key="3">
    <source>
        <dbReference type="PROSITE-ProRule" id="PRU01230"/>
    </source>
</evidence>
<evidence type="ECO:0000305" key="4"/>
<sequence>MACCIPDELKEQKRINQEIERQLKRDKRDARRELKLLLLGTGESGKSTFIKQMRIIHGAGYSDEDKRSHIKIVYQNIFMAMHAMIRAMDTLNIQYINPANRENGNMIRQIDYETVTTFDKPCVDAIISLWNDDGIQECYDRRREYQLTDSAKYYLDSVERISQQDYLPTLQDILRVRVPTTGIIEYPFDLDSIIFRMVDVGGQRSERRKWIHCFENVTSIMFLVALSEYDQVLVESDNENRMEESKALFRTIITYPWFQNSSVILFLNKKDLLEEKIMHSHLVDYFPEFDGPKKEASTAREFILKMFVELNPDPDKIIYSHFTCATDTENIRFVFAAVKDTILQLNLKEYNLV</sequence>
<keyword id="KW-0342">GTP-binding</keyword>
<keyword id="KW-0449">Lipoprotein</keyword>
<keyword id="KW-0460">Magnesium</keyword>
<keyword id="KW-0479">Metal-binding</keyword>
<keyword id="KW-0547">Nucleotide-binding</keyword>
<keyword id="KW-0564">Palmitate</keyword>
<keyword id="KW-0807">Transducer</keyword>
<accession>P38411</accession>
<feature type="chain" id="PRO_0000203766" description="Guanine nucleotide-binding protein G(q) subunit alpha">
    <location>
        <begin position="1"/>
        <end position="353"/>
    </location>
</feature>
<feature type="domain" description="G-alpha" evidence="3">
    <location>
        <begin position="32"/>
        <end position="353"/>
    </location>
</feature>
<feature type="region of interest" description="G1 motif" evidence="3">
    <location>
        <begin position="35"/>
        <end position="48"/>
    </location>
</feature>
<feature type="region of interest" description="G2 motif" evidence="3">
    <location>
        <begin position="172"/>
        <end position="180"/>
    </location>
</feature>
<feature type="region of interest" description="G3 motif" evidence="3">
    <location>
        <begin position="195"/>
        <end position="204"/>
    </location>
</feature>
<feature type="region of interest" description="G4 motif" evidence="3">
    <location>
        <begin position="264"/>
        <end position="271"/>
    </location>
</feature>
<feature type="region of interest" description="G5 motif" evidence="3">
    <location>
        <begin position="323"/>
        <end position="328"/>
    </location>
</feature>
<feature type="binding site" evidence="1">
    <location>
        <begin position="40"/>
        <end position="47"/>
    </location>
    <ligand>
        <name>GTP</name>
        <dbReference type="ChEBI" id="CHEBI:37565"/>
    </ligand>
</feature>
<feature type="binding site" evidence="1">
    <location>
        <position position="47"/>
    </location>
    <ligand>
        <name>Mg(2+)</name>
        <dbReference type="ChEBI" id="CHEBI:18420"/>
    </ligand>
</feature>
<feature type="binding site" evidence="1">
    <location>
        <begin position="174"/>
        <end position="180"/>
    </location>
    <ligand>
        <name>GTP</name>
        <dbReference type="ChEBI" id="CHEBI:37565"/>
    </ligand>
</feature>
<feature type="binding site" evidence="1">
    <location>
        <position position="180"/>
    </location>
    <ligand>
        <name>Mg(2+)</name>
        <dbReference type="ChEBI" id="CHEBI:18420"/>
    </ligand>
</feature>
<feature type="binding site" evidence="1">
    <location>
        <begin position="199"/>
        <end position="203"/>
    </location>
    <ligand>
        <name>GTP</name>
        <dbReference type="ChEBI" id="CHEBI:37565"/>
    </ligand>
</feature>
<feature type="binding site" evidence="1">
    <location>
        <begin position="268"/>
        <end position="271"/>
    </location>
    <ligand>
        <name>GTP</name>
        <dbReference type="ChEBI" id="CHEBI:37565"/>
    </ligand>
</feature>
<feature type="binding site" evidence="1">
    <location>
        <position position="325"/>
    </location>
    <ligand>
        <name>GTP</name>
        <dbReference type="ChEBI" id="CHEBI:37565"/>
    </ligand>
</feature>
<feature type="lipid moiety-binding region" description="S-palmitoyl cysteine" evidence="2">
    <location>
        <position position="3"/>
    </location>
</feature>
<feature type="lipid moiety-binding region" description="S-palmitoyl cysteine" evidence="2">
    <location>
        <position position="4"/>
    </location>
</feature>
<name>GNAQ_LYMST</name>
<proteinExistence type="evidence at transcript level"/>
<protein>
    <recommendedName>
        <fullName>Guanine nucleotide-binding protein G(q) subunit alpha</fullName>
    </recommendedName>
    <alternativeName>
        <fullName>Guanine nucleotide-binding protein alpha-q</fullName>
    </alternativeName>
</protein>